<accession>P63448</accession>
<accession>Q9PFI5</accession>
<organism>
    <name type="scientific">Xylella fastidiosa (strain 9a5c)</name>
    <dbReference type="NCBI Taxonomy" id="160492"/>
    <lineage>
        <taxon>Bacteria</taxon>
        <taxon>Pseudomonadati</taxon>
        <taxon>Pseudomonadota</taxon>
        <taxon>Gammaproteobacteria</taxon>
        <taxon>Lysobacterales</taxon>
        <taxon>Lysobacteraceae</taxon>
        <taxon>Xylella</taxon>
    </lineage>
</organism>
<evidence type="ECO:0000255" key="1">
    <source>
        <dbReference type="HAMAP-Rule" id="MF_01217"/>
    </source>
</evidence>
<evidence type="ECO:0000255" key="2">
    <source>
        <dbReference type="PROSITE-ProRule" id="PRU00258"/>
    </source>
</evidence>
<evidence type="ECO:0000305" key="3"/>
<proteinExistence type="inferred from homology"/>
<gene>
    <name evidence="1" type="primary">acpP</name>
    <name type="ordered locus">XF_0672</name>
</gene>
<name>ACP_XYLFA</name>
<protein>
    <recommendedName>
        <fullName evidence="1">Acyl carrier protein</fullName>
        <shortName evidence="1">ACP</shortName>
    </recommendedName>
</protein>
<sequence>MSDIEARVRKIVAEKLNVDEEKVTNTSTFVDELGADSLDTVELVMALEDEFQCEIGDEAAEKMTSVQHAIDYIKSNAKC</sequence>
<dbReference type="EMBL" id="AE003849">
    <property type="protein sequence ID" value="AAF83482.1"/>
    <property type="status" value="ALT_INIT"/>
    <property type="molecule type" value="Genomic_DNA"/>
</dbReference>
<dbReference type="PIR" id="G82776">
    <property type="entry name" value="G82776"/>
</dbReference>
<dbReference type="RefSeq" id="WP_004083472.1">
    <property type="nucleotide sequence ID" value="NC_002488.3"/>
</dbReference>
<dbReference type="SMR" id="P63448"/>
<dbReference type="STRING" id="160492.XF_0672"/>
<dbReference type="GeneID" id="93905324"/>
<dbReference type="KEGG" id="xfa:XF_0672"/>
<dbReference type="eggNOG" id="COG0236">
    <property type="taxonomic scope" value="Bacteria"/>
</dbReference>
<dbReference type="HOGENOM" id="CLU_108696_5_1_6"/>
<dbReference type="UniPathway" id="UPA00094"/>
<dbReference type="Proteomes" id="UP000000812">
    <property type="component" value="Chromosome"/>
</dbReference>
<dbReference type="GO" id="GO:0005829">
    <property type="term" value="C:cytosol"/>
    <property type="evidence" value="ECO:0007669"/>
    <property type="project" value="TreeGrafter"/>
</dbReference>
<dbReference type="GO" id="GO:0016020">
    <property type="term" value="C:membrane"/>
    <property type="evidence" value="ECO:0007669"/>
    <property type="project" value="GOC"/>
</dbReference>
<dbReference type="GO" id="GO:0000035">
    <property type="term" value="F:acyl binding"/>
    <property type="evidence" value="ECO:0007669"/>
    <property type="project" value="TreeGrafter"/>
</dbReference>
<dbReference type="GO" id="GO:0000036">
    <property type="term" value="F:acyl carrier activity"/>
    <property type="evidence" value="ECO:0007669"/>
    <property type="project" value="UniProtKB-UniRule"/>
</dbReference>
<dbReference type="GO" id="GO:0009245">
    <property type="term" value="P:lipid A biosynthetic process"/>
    <property type="evidence" value="ECO:0007669"/>
    <property type="project" value="TreeGrafter"/>
</dbReference>
<dbReference type="FunFam" id="1.10.1200.10:FF:000001">
    <property type="entry name" value="Acyl carrier protein"/>
    <property type="match status" value="1"/>
</dbReference>
<dbReference type="Gene3D" id="1.10.1200.10">
    <property type="entry name" value="ACP-like"/>
    <property type="match status" value="1"/>
</dbReference>
<dbReference type="HAMAP" id="MF_01217">
    <property type="entry name" value="Acyl_carrier"/>
    <property type="match status" value="1"/>
</dbReference>
<dbReference type="InterPro" id="IPR003231">
    <property type="entry name" value="ACP"/>
</dbReference>
<dbReference type="InterPro" id="IPR036736">
    <property type="entry name" value="ACP-like_sf"/>
</dbReference>
<dbReference type="InterPro" id="IPR009081">
    <property type="entry name" value="PP-bd_ACP"/>
</dbReference>
<dbReference type="InterPro" id="IPR006162">
    <property type="entry name" value="Ppantetheine_attach_site"/>
</dbReference>
<dbReference type="NCBIfam" id="TIGR00517">
    <property type="entry name" value="acyl_carrier"/>
    <property type="match status" value="1"/>
</dbReference>
<dbReference type="NCBIfam" id="NF002148">
    <property type="entry name" value="PRK00982.1-2"/>
    <property type="match status" value="1"/>
</dbReference>
<dbReference type="NCBIfam" id="NF002149">
    <property type="entry name" value="PRK00982.1-3"/>
    <property type="match status" value="1"/>
</dbReference>
<dbReference type="NCBIfam" id="NF002150">
    <property type="entry name" value="PRK00982.1-4"/>
    <property type="match status" value="1"/>
</dbReference>
<dbReference type="NCBIfam" id="NF002151">
    <property type="entry name" value="PRK00982.1-5"/>
    <property type="match status" value="1"/>
</dbReference>
<dbReference type="PANTHER" id="PTHR20863">
    <property type="entry name" value="ACYL CARRIER PROTEIN"/>
    <property type="match status" value="1"/>
</dbReference>
<dbReference type="PANTHER" id="PTHR20863:SF76">
    <property type="entry name" value="CARRIER DOMAIN-CONTAINING PROTEIN"/>
    <property type="match status" value="1"/>
</dbReference>
<dbReference type="Pfam" id="PF00550">
    <property type="entry name" value="PP-binding"/>
    <property type="match status" value="1"/>
</dbReference>
<dbReference type="SUPFAM" id="SSF47336">
    <property type="entry name" value="ACP-like"/>
    <property type="match status" value="1"/>
</dbReference>
<dbReference type="PROSITE" id="PS50075">
    <property type="entry name" value="CARRIER"/>
    <property type="match status" value="1"/>
</dbReference>
<dbReference type="PROSITE" id="PS00012">
    <property type="entry name" value="PHOSPHOPANTETHEINE"/>
    <property type="match status" value="1"/>
</dbReference>
<keyword id="KW-0963">Cytoplasm</keyword>
<keyword id="KW-0275">Fatty acid biosynthesis</keyword>
<keyword id="KW-0276">Fatty acid metabolism</keyword>
<keyword id="KW-0444">Lipid biosynthesis</keyword>
<keyword id="KW-0443">Lipid metabolism</keyword>
<keyword id="KW-0596">Phosphopantetheine</keyword>
<keyword id="KW-0597">Phosphoprotein</keyword>
<reference key="1">
    <citation type="journal article" date="2000" name="Nature">
        <title>The genome sequence of the plant pathogen Xylella fastidiosa.</title>
        <authorList>
            <person name="Simpson A.J.G."/>
            <person name="Reinach F.C."/>
            <person name="Arruda P."/>
            <person name="Abreu F.A."/>
            <person name="Acencio M."/>
            <person name="Alvarenga R."/>
            <person name="Alves L.M.C."/>
            <person name="Araya J.E."/>
            <person name="Baia G.S."/>
            <person name="Baptista C.S."/>
            <person name="Barros M.H."/>
            <person name="Bonaccorsi E.D."/>
            <person name="Bordin S."/>
            <person name="Bove J.M."/>
            <person name="Briones M.R.S."/>
            <person name="Bueno M.R.P."/>
            <person name="Camargo A.A."/>
            <person name="Camargo L.E.A."/>
            <person name="Carraro D.M."/>
            <person name="Carrer H."/>
            <person name="Colauto N.B."/>
            <person name="Colombo C."/>
            <person name="Costa F.F."/>
            <person name="Costa M.C.R."/>
            <person name="Costa-Neto C.M."/>
            <person name="Coutinho L.L."/>
            <person name="Cristofani M."/>
            <person name="Dias-Neto E."/>
            <person name="Docena C."/>
            <person name="El-Dorry H."/>
            <person name="Facincani A.P."/>
            <person name="Ferreira A.J.S."/>
            <person name="Ferreira V.C.A."/>
            <person name="Ferro J.A."/>
            <person name="Fraga J.S."/>
            <person name="Franca S.C."/>
            <person name="Franco M.C."/>
            <person name="Frohme M."/>
            <person name="Furlan L.R."/>
            <person name="Garnier M."/>
            <person name="Goldman G.H."/>
            <person name="Goldman M.H.S."/>
            <person name="Gomes S.L."/>
            <person name="Gruber A."/>
            <person name="Ho P.L."/>
            <person name="Hoheisel J.D."/>
            <person name="Junqueira M.L."/>
            <person name="Kemper E.L."/>
            <person name="Kitajima J.P."/>
            <person name="Krieger J.E."/>
            <person name="Kuramae E.E."/>
            <person name="Laigret F."/>
            <person name="Lambais M.R."/>
            <person name="Leite L.C.C."/>
            <person name="Lemos E.G.M."/>
            <person name="Lemos M.V.F."/>
            <person name="Lopes S.A."/>
            <person name="Lopes C.R."/>
            <person name="Machado J.A."/>
            <person name="Machado M.A."/>
            <person name="Madeira A.M.B.N."/>
            <person name="Madeira H.M.F."/>
            <person name="Marino C.L."/>
            <person name="Marques M.V."/>
            <person name="Martins E.A.L."/>
            <person name="Martins E.M.F."/>
            <person name="Matsukuma A.Y."/>
            <person name="Menck C.F.M."/>
            <person name="Miracca E.C."/>
            <person name="Miyaki C.Y."/>
            <person name="Monteiro-Vitorello C.B."/>
            <person name="Moon D.H."/>
            <person name="Nagai M.A."/>
            <person name="Nascimento A.L.T.O."/>
            <person name="Netto L.E.S."/>
            <person name="Nhani A. Jr."/>
            <person name="Nobrega F.G."/>
            <person name="Nunes L.R."/>
            <person name="Oliveira M.A."/>
            <person name="de Oliveira M.C."/>
            <person name="de Oliveira R.C."/>
            <person name="Palmieri D.A."/>
            <person name="Paris A."/>
            <person name="Peixoto B.R."/>
            <person name="Pereira G.A.G."/>
            <person name="Pereira H.A. Jr."/>
            <person name="Pesquero J.B."/>
            <person name="Quaggio R.B."/>
            <person name="Roberto P.G."/>
            <person name="Rodrigues V."/>
            <person name="de Rosa A.J.M."/>
            <person name="de Rosa V.E. Jr."/>
            <person name="de Sa R.G."/>
            <person name="Santelli R.V."/>
            <person name="Sawasaki H.E."/>
            <person name="da Silva A.C.R."/>
            <person name="da Silva A.M."/>
            <person name="da Silva F.R."/>
            <person name="Silva W.A. Jr."/>
            <person name="da Silveira J.F."/>
            <person name="Silvestri M.L.Z."/>
            <person name="Siqueira W.J."/>
            <person name="de Souza A.A."/>
            <person name="de Souza A.P."/>
            <person name="Terenzi M.F."/>
            <person name="Truffi D."/>
            <person name="Tsai S.M."/>
            <person name="Tsuhako M.H."/>
            <person name="Vallada H."/>
            <person name="Van Sluys M.A."/>
            <person name="Verjovski-Almeida S."/>
            <person name="Vettore A.L."/>
            <person name="Zago M.A."/>
            <person name="Zatz M."/>
            <person name="Meidanis J."/>
            <person name="Setubal J.C."/>
        </authorList>
    </citation>
    <scope>NUCLEOTIDE SEQUENCE [LARGE SCALE GENOMIC DNA]</scope>
    <source>
        <strain>9a5c</strain>
    </source>
</reference>
<comment type="function">
    <text evidence="1">Carrier of the growing fatty acid chain in fatty acid biosynthesis.</text>
</comment>
<comment type="pathway">
    <text evidence="1">Lipid metabolism; fatty acid biosynthesis.</text>
</comment>
<comment type="subcellular location">
    <subcellularLocation>
        <location evidence="1">Cytoplasm</location>
    </subcellularLocation>
</comment>
<comment type="PTM">
    <text evidence="1">4'-phosphopantetheine is transferred from CoA to a specific serine of apo-ACP by AcpS. This modification is essential for activity because fatty acids are bound in thioester linkage to the sulfhydryl of the prosthetic group.</text>
</comment>
<comment type="similarity">
    <text evidence="1">Belongs to the acyl carrier protein (ACP) family.</text>
</comment>
<comment type="sequence caution" evidence="3">
    <conflict type="erroneous initiation">
        <sequence resource="EMBL-CDS" id="AAF83482"/>
    </conflict>
</comment>
<feature type="chain" id="PRO_0000180224" description="Acyl carrier protein">
    <location>
        <begin position="1"/>
        <end position="79"/>
    </location>
</feature>
<feature type="domain" description="Carrier" evidence="2">
    <location>
        <begin position="2"/>
        <end position="77"/>
    </location>
</feature>
<feature type="modified residue" description="O-(pantetheine 4'-phosphoryl)serine" evidence="2">
    <location>
        <position position="37"/>
    </location>
</feature>